<evidence type="ECO:0000255" key="1">
    <source>
        <dbReference type="PROSITE-ProRule" id="PRU00156"/>
    </source>
</evidence>
<evidence type="ECO:0000305" key="2"/>
<keyword id="KW-0963">Cytoplasm</keyword>
<keyword id="KW-0413">Isomerase</keyword>
<keyword id="KW-0697">Rotamase</keyword>
<comment type="function">
    <text>PPIases accelerate the folding of proteins. It catalyzes the cis-trans isomerization of proline imidic peptide bonds in oligopeptides.</text>
</comment>
<comment type="catalytic activity">
    <reaction>
        <text>[protein]-peptidylproline (omega=180) = [protein]-peptidylproline (omega=0)</text>
        <dbReference type="Rhea" id="RHEA:16237"/>
        <dbReference type="Rhea" id="RHEA-COMP:10747"/>
        <dbReference type="Rhea" id="RHEA-COMP:10748"/>
        <dbReference type="ChEBI" id="CHEBI:83833"/>
        <dbReference type="ChEBI" id="CHEBI:83834"/>
        <dbReference type="EC" id="5.2.1.8"/>
    </reaction>
</comment>
<comment type="activity regulation">
    <text>Binds cyclosporin A (CsA). CsA mediates some of its effects via an inhibitory action on PPIase.</text>
</comment>
<comment type="subcellular location">
    <subcellularLocation>
        <location>Cytoplasm</location>
    </subcellularLocation>
</comment>
<comment type="similarity">
    <text evidence="2">Belongs to the cyclophilin-type PPIase family.</text>
</comment>
<name>CYPH_BRANA</name>
<protein>
    <recommendedName>
        <fullName>Peptidyl-prolyl cis-trans isomerase</fullName>
        <shortName>PPIase</shortName>
        <ecNumber>5.2.1.8</ecNumber>
    </recommendedName>
    <alternativeName>
        <fullName>Cyclophilin</fullName>
    </alternativeName>
    <alternativeName>
        <fullName>Cyclosporin A-binding protein</fullName>
    </alternativeName>
    <alternativeName>
        <fullName>Rotamase</fullName>
    </alternativeName>
</protein>
<feature type="chain" id="PRO_0000064142" description="Peptidyl-prolyl cis-trans isomerase">
    <location>
        <begin position="1"/>
        <end position="171"/>
    </location>
</feature>
<feature type="domain" description="PPIase cyclophilin-type" evidence="1">
    <location>
        <begin position="7"/>
        <end position="170"/>
    </location>
</feature>
<gene>
    <name type="primary">CYP</name>
    <name type="synonym">ROT1</name>
</gene>
<sequence>MVNPKVYFDMTVGDKAAGRIVMELYADTVPETAENFRALCTGERGIGKSGKPLHYKGSAFHRVIPKFMCQGGDFTAGNGTGGESIYGMKFKDENFVKKHTGPGILSMRNAGSNTNGSQFFICTEKTSWLDGKHVVFGQVVEGMDVVRDIEKVGSDSGRTSKKVVTCDCGQL</sequence>
<accession>P24525</accession>
<dbReference type="EC" id="5.2.1.8"/>
<dbReference type="EMBL" id="M55018">
    <property type="protein sequence ID" value="AAA62706.1"/>
    <property type="molecule type" value="mRNA"/>
</dbReference>
<dbReference type="PIR" id="B39252">
    <property type="entry name" value="CSRP"/>
</dbReference>
<dbReference type="SMR" id="P24525"/>
<dbReference type="GO" id="GO:0005737">
    <property type="term" value="C:cytoplasm"/>
    <property type="evidence" value="ECO:0007669"/>
    <property type="project" value="UniProtKB-SubCell"/>
</dbReference>
<dbReference type="GO" id="GO:0003755">
    <property type="term" value="F:peptidyl-prolyl cis-trans isomerase activity"/>
    <property type="evidence" value="ECO:0007669"/>
    <property type="project" value="UniProtKB-KW"/>
</dbReference>
<dbReference type="GO" id="GO:0006457">
    <property type="term" value="P:protein folding"/>
    <property type="evidence" value="ECO:0007669"/>
    <property type="project" value="InterPro"/>
</dbReference>
<dbReference type="CDD" id="cd01926">
    <property type="entry name" value="cyclophilin_ABH_like"/>
    <property type="match status" value="1"/>
</dbReference>
<dbReference type="FunFam" id="2.40.100.10:FF:000002">
    <property type="entry name" value="Peptidyl-prolyl cis-trans isomerase"/>
    <property type="match status" value="1"/>
</dbReference>
<dbReference type="Gene3D" id="2.40.100.10">
    <property type="entry name" value="Cyclophilin-like"/>
    <property type="match status" value="1"/>
</dbReference>
<dbReference type="InterPro" id="IPR029000">
    <property type="entry name" value="Cyclophilin-like_dom_sf"/>
</dbReference>
<dbReference type="InterPro" id="IPR024936">
    <property type="entry name" value="Cyclophilin-type_PPIase"/>
</dbReference>
<dbReference type="InterPro" id="IPR020892">
    <property type="entry name" value="Cyclophilin-type_PPIase_CS"/>
</dbReference>
<dbReference type="InterPro" id="IPR002130">
    <property type="entry name" value="Cyclophilin-type_PPIase_dom"/>
</dbReference>
<dbReference type="PANTHER" id="PTHR11071">
    <property type="entry name" value="PEPTIDYL-PROLYL CIS-TRANS ISOMERASE"/>
    <property type="match status" value="1"/>
</dbReference>
<dbReference type="PANTHER" id="PTHR11071:SF538">
    <property type="entry name" value="PEPTIDYL-PROLYL CIS-TRANS ISOMERASE CYP19-1"/>
    <property type="match status" value="1"/>
</dbReference>
<dbReference type="Pfam" id="PF00160">
    <property type="entry name" value="Pro_isomerase"/>
    <property type="match status" value="1"/>
</dbReference>
<dbReference type="PIRSF" id="PIRSF001467">
    <property type="entry name" value="Peptidylpro_ismrse"/>
    <property type="match status" value="1"/>
</dbReference>
<dbReference type="PRINTS" id="PR00153">
    <property type="entry name" value="CSAPPISMRASE"/>
</dbReference>
<dbReference type="SUPFAM" id="SSF50891">
    <property type="entry name" value="Cyclophilin-like"/>
    <property type="match status" value="1"/>
</dbReference>
<dbReference type="PROSITE" id="PS00170">
    <property type="entry name" value="CSA_PPIASE_1"/>
    <property type="match status" value="1"/>
</dbReference>
<dbReference type="PROSITE" id="PS50072">
    <property type="entry name" value="CSA_PPIASE_2"/>
    <property type="match status" value="1"/>
</dbReference>
<proteinExistence type="evidence at transcript level"/>
<reference key="1">
    <citation type="journal article" date="1990" name="Proc. Natl. Acad. Sci. U.S.A.">
        <title>Structure and expression of cytosolic cyclophilin/peptidyl-prolyl cis-trans isomerase of higher plants and production of active tomato cyclophilin in Escherichia coli.</title>
        <authorList>
            <person name="Gasser C.S."/>
            <person name="Gunning D.A."/>
            <person name="Budelier K.A."/>
            <person name="Brown S.M."/>
        </authorList>
    </citation>
    <scope>NUCLEOTIDE SEQUENCE [MRNA]</scope>
    <source>
        <strain>cv. Westar</strain>
    </source>
</reference>
<organism>
    <name type="scientific">Brassica napus</name>
    <name type="common">Rape</name>
    <dbReference type="NCBI Taxonomy" id="3708"/>
    <lineage>
        <taxon>Eukaryota</taxon>
        <taxon>Viridiplantae</taxon>
        <taxon>Streptophyta</taxon>
        <taxon>Embryophyta</taxon>
        <taxon>Tracheophyta</taxon>
        <taxon>Spermatophyta</taxon>
        <taxon>Magnoliopsida</taxon>
        <taxon>eudicotyledons</taxon>
        <taxon>Gunneridae</taxon>
        <taxon>Pentapetalae</taxon>
        <taxon>rosids</taxon>
        <taxon>malvids</taxon>
        <taxon>Brassicales</taxon>
        <taxon>Brassicaceae</taxon>
        <taxon>Brassiceae</taxon>
        <taxon>Brassica</taxon>
    </lineage>
</organism>